<protein>
    <recommendedName>
        <fullName evidence="1">Acyl carrier protein AcpP</fullName>
        <shortName evidence="1">ACP</shortName>
    </recommendedName>
</protein>
<dbReference type="EMBL" id="AF159244">
    <property type="protein sequence ID" value="AAF24181.1"/>
    <property type="molecule type" value="Genomic_DNA"/>
</dbReference>
<dbReference type="EMBL" id="AL591688">
    <property type="protein sequence ID" value="CAC45722.1"/>
    <property type="molecule type" value="Genomic_DNA"/>
</dbReference>
<dbReference type="PIR" id="A36728">
    <property type="entry name" value="A36728"/>
</dbReference>
<dbReference type="RefSeq" id="NP_385249.1">
    <property type="nucleotide sequence ID" value="NC_003047.1"/>
</dbReference>
<dbReference type="RefSeq" id="WP_003531676.1">
    <property type="nucleotide sequence ID" value="NC_003047.1"/>
</dbReference>
<dbReference type="SMR" id="P19372"/>
<dbReference type="EnsemblBacteria" id="CAC45722">
    <property type="protein sequence ID" value="CAC45722"/>
    <property type="gene ID" value="SMc00573"/>
</dbReference>
<dbReference type="KEGG" id="sme:SMc00573"/>
<dbReference type="PATRIC" id="fig|266834.11.peg.2552"/>
<dbReference type="eggNOG" id="COG0236">
    <property type="taxonomic scope" value="Bacteria"/>
</dbReference>
<dbReference type="HOGENOM" id="CLU_108696_5_1_5"/>
<dbReference type="OrthoDB" id="9804551at2"/>
<dbReference type="UniPathway" id="UPA00094"/>
<dbReference type="PRO" id="PR:P19372"/>
<dbReference type="Proteomes" id="UP000001976">
    <property type="component" value="Chromosome"/>
</dbReference>
<dbReference type="GO" id="GO:0005829">
    <property type="term" value="C:cytosol"/>
    <property type="evidence" value="ECO:0007669"/>
    <property type="project" value="TreeGrafter"/>
</dbReference>
<dbReference type="GO" id="GO:0016020">
    <property type="term" value="C:membrane"/>
    <property type="evidence" value="ECO:0007669"/>
    <property type="project" value="GOC"/>
</dbReference>
<dbReference type="GO" id="GO:0000035">
    <property type="term" value="F:acyl binding"/>
    <property type="evidence" value="ECO:0007669"/>
    <property type="project" value="TreeGrafter"/>
</dbReference>
<dbReference type="GO" id="GO:0000036">
    <property type="term" value="F:acyl carrier activity"/>
    <property type="evidence" value="ECO:0007669"/>
    <property type="project" value="UniProtKB-UniRule"/>
</dbReference>
<dbReference type="GO" id="GO:0009245">
    <property type="term" value="P:lipid A biosynthetic process"/>
    <property type="evidence" value="ECO:0007669"/>
    <property type="project" value="TreeGrafter"/>
</dbReference>
<dbReference type="FunFam" id="1.10.1200.10:FF:000001">
    <property type="entry name" value="Acyl carrier protein"/>
    <property type="match status" value="1"/>
</dbReference>
<dbReference type="Gene3D" id="1.10.1200.10">
    <property type="entry name" value="ACP-like"/>
    <property type="match status" value="1"/>
</dbReference>
<dbReference type="HAMAP" id="MF_01217">
    <property type="entry name" value="Acyl_carrier"/>
    <property type="match status" value="1"/>
</dbReference>
<dbReference type="InterPro" id="IPR003231">
    <property type="entry name" value="ACP"/>
</dbReference>
<dbReference type="InterPro" id="IPR036736">
    <property type="entry name" value="ACP-like_sf"/>
</dbReference>
<dbReference type="InterPro" id="IPR009081">
    <property type="entry name" value="PP-bd_ACP"/>
</dbReference>
<dbReference type="InterPro" id="IPR006162">
    <property type="entry name" value="Ppantetheine_attach_site"/>
</dbReference>
<dbReference type="NCBIfam" id="TIGR00517">
    <property type="entry name" value="acyl_carrier"/>
    <property type="match status" value="1"/>
</dbReference>
<dbReference type="NCBIfam" id="NF002148">
    <property type="entry name" value="PRK00982.1-2"/>
    <property type="match status" value="1"/>
</dbReference>
<dbReference type="NCBIfam" id="NF002149">
    <property type="entry name" value="PRK00982.1-3"/>
    <property type="match status" value="1"/>
</dbReference>
<dbReference type="NCBIfam" id="NF002150">
    <property type="entry name" value="PRK00982.1-4"/>
    <property type="match status" value="1"/>
</dbReference>
<dbReference type="NCBIfam" id="NF002151">
    <property type="entry name" value="PRK00982.1-5"/>
    <property type="match status" value="1"/>
</dbReference>
<dbReference type="PANTHER" id="PTHR20863">
    <property type="entry name" value="ACYL CARRIER PROTEIN"/>
    <property type="match status" value="1"/>
</dbReference>
<dbReference type="PANTHER" id="PTHR20863:SF76">
    <property type="entry name" value="CARRIER DOMAIN-CONTAINING PROTEIN"/>
    <property type="match status" value="1"/>
</dbReference>
<dbReference type="Pfam" id="PF00550">
    <property type="entry name" value="PP-binding"/>
    <property type="match status" value="1"/>
</dbReference>
<dbReference type="SUPFAM" id="SSF47336">
    <property type="entry name" value="ACP-like"/>
    <property type="match status" value="1"/>
</dbReference>
<dbReference type="PROSITE" id="PS50075">
    <property type="entry name" value="CARRIER"/>
    <property type="match status" value="1"/>
</dbReference>
<dbReference type="PROSITE" id="PS00012">
    <property type="entry name" value="PHOSPHOPANTETHEINE"/>
    <property type="match status" value="1"/>
</dbReference>
<gene>
    <name evidence="1" type="primary">acpP</name>
    <name type="ordered locus">R01143</name>
    <name type="ORF">SMc00573</name>
</gene>
<proteinExistence type="evidence at protein level"/>
<organism>
    <name type="scientific">Rhizobium meliloti (strain 1021)</name>
    <name type="common">Ensifer meliloti</name>
    <name type="synonym">Sinorhizobium meliloti</name>
    <dbReference type="NCBI Taxonomy" id="266834"/>
    <lineage>
        <taxon>Bacteria</taxon>
        <taxon>Pseudomonadati</taxon>
        <taxon>Pseudomonadota</taxon>
        <taxon>Alphaproteobacteria</taxon>
        <taxon>Hyphomicrobiales</taxon>
        <taxon>Rhizobiaceae</taxon>
        <taxon>Sinorhizobium/Ensifer group</taxon>
        <taxon>Sinorhizobium</taxon>
    </lineage>
</organism>
<sequence length="78" mass="8340">MSDIAERVKKIVIDHLGVDAEKVSEGASFIDDLGADSLDTVELVMAFEEEFGVEIPDDAADSILTVGDAVKFIEKAQA</sequence>
<reference key="1">
    <citation type="journal article" date="2000" name="Microbiology">
        <title>Expression and purification of four different rhizobial acyl carrier proteins.</title>
        <authorList>
            <person name="Lopez-Lara I.M."/>
            <person name="Geiger O."/>
        </authorList>
    </citation>
    <scope>NUCLEOTIDE SEQUENCE [GENOMIC DNA]</scope>
    <scope>PHOSPHOPANTETHEINYLATION AT SER-37</scope>
    <source>
        <strain>1021</strain>
    </source>
</reference>
<reference key="2">
    <citation type="journal article" date="2001" name="Proc. Natl. Acad. Sci. U.S.A.">
        <title>Analysis of the chromosome sequence of the legume symbiont Sinorhizobium meliloti strain 1021.</title>
        <authorList>
            <person name="Capela D."/>
            <person name="Barloy-Hubler F."/>
            <person name="Gouzy J."/>
            <person name="Bothe G."/>
            <person name="Ampe F."/>
            <person name="Batut J."/>
            <person name="Boistard P."/>
            <person name="Becker A."/>
            <person name="Boutry M."/>
            <person name="Cadieu E."/>
            <person name="Dreano S."/>
            <person name="Gloux S."/>
            <person name="Godrie T."/>
            <person name="Goffeau A."/>
            <person name="Kahn D."/>
            <person name="Kiss E."/>
            <person name="Lelaure V."/>
            <person name="Masuy D."/>
            <person name="Pohl T."/>
            <person name="Portetelle D."/>
            <person name="Puehler A."/>
            <person name="Purnelle B."/>
            <person name="Ramsperger U."/>
            <person name="Renard C."/>
            <person name="Thebault P."/>
            <person name="Vandenbol M."/>
            <person name="Weidner S."/>
            <person name="Galibert F."/>
        </authorList>
    </citation>
    <scope>NUCLEOTIDE SEQUENCE [LARGE SCALE GENOMIC DNA]</scope>
    <source>
        <strain>1021</strain>
    </source>
</reference>
<reference key="3">
    <citation type="journal article" date="2001" name="Science">
        <title>The composite genome of the legume symbiont Sinorhizobium meliloti.</title>
        <authorList>
            <person name="Galibert F."/>
            <person name="Finan T.M."/>
            <person name="Long S.R."/>
            <person name="Puehler A."/>
            <person name="Abola P."/>
            <person name="Ampe F."/>
            <person name="Barloy-Hubler F."/>
            <person name="Barnett M.J."/>
            <person name="Becker A."/>
            <person name="Boistard P."/>
            <person name="Bothe G."/>
            <person name="Boutry M."/>
            <person name="Bowser L."/>
            <person name="Buhrmester J."/>
            <person name="Cadieu E."/>
            <person name="Capela D."/>
            <person name="Chain P."/>
            <person name="Cowie A."/>
            <person name="Davis R.W."/>
            <person name="Dreano S."/>
            <person name="Federspiel N.A."/>
            <person name="Fisher R.F."/>
            <person name="Gloux S."/>
            <person name="Godrie T."/>
            <person name="Goffeau A."/>
            <person name="Golding B."/>
            <person name="Gouzy J."/>
            <person name="Gurjal M."/>
            <person name="Hernandez-Lucas I."/>
            <person name="Hong A."/>
            <person name="Huizar L."/>
            <person name="Hyman R.W."/>
            <person name="Jones T."/>
            <person name="Kahn D."/>
            <person name="Kahn M.L."/>
            <person name="Kalman S."/>
            <person name="Keating D.H."/>
            <person name="Kiss E."/>
            <person name="Komp C."/>
            <person name="Lelaure V."/>
            <person name="Masuy D."/>
            <person name="Palm C."/>
            <person name="Peck M.C."/>
            <person name="Pohl T.M."/>
            <person name="Portetelle D."/>
            <person name="Purnelle B."/>
            <person name="Ramsperger U."/>
            <person name="Surzycki R."/>
            <person name="Thebault P."/>
            <person name="Vandenbol M."/>
            <person name="Vorhoelter F.J."/>
            <person name="Weidner S."/>
            <person name="Wells D.H."/>
            <person name="Wong K."/>
            <person name="Yeh K.-C."/>
            <person name="Batut J."/>
        </authorList>
    </citation>
    <scope>NUCLEOTIDE SEQUENCE [LARGE SCALE GENOMIC DNA]</scope>
    <source>
        <strain>1021</strain>
    </source>
</reference>
<reference key="4">
    <citation type="journal article" date="1990" name="J. Bacteriol.">
        <title>Isolation and characterization of the constitutive acyl carrier protein from Rhizobium meliloti.</title>
        <authorList>
            <person name="Platt M.K."/>
            <person name="Miller K.J."/>
            <person name="Lane W.S."/>
            <person name="Kennedy E.P."/>
        </authorList>
    </citation>
    <scope>PROTEIN SEQUENCE OF 2-78</scope>
    <source>
        <strain>1021</strain>
    </source>
</reference>
<keyword id="KW-0963">Cytoplasm</keyword>
<keyword id="KW-0903">Direct protein sequencing</keyword>
<keyword id="KW-0275">Fatty acid biosynthesis</keyword>
<keyword id="KW-0276">Fatty acid metabolism</keyword>
<keyword id="KW-0444">Lipid biosynthesis</keyword>
<keyword id="KW-0443">Lipid metabolism</keyword>
<keyword id="KW-0596">Phosphopantetheine</keyword>
<keyword id="KW-0597">Phosphoprotein</keyword>
<keyword id="KW-1185">Reference proteome</keyword>
<accession>P19372</accession>
<evidence type="ECO:0000255" key="1">
    <source>
        <dbReference type="HAMAP-Rule" id="MF_01217"/>
    </source>
</evidence>
<evidence type="ECO:0000255" key="2">
    <source>
        <dbReference type="PROSITE-ProRule" id="PRU00258"/>
    </source>
</evidence>
<evidence type="ECO:0000269" key="3">
    <source>
    </source>
</evidence>
<evidence type="ECO:0000269" key="4">
    <source>
    </source>
</evidence>
<name>ACP_RHIME</name>
<comment type="function">
    <text>Carrier of the growing fatty acid chain in fatty acid biosynthesis.</text>
</comment>
<comment type="pathway">
    <text evidence="1">Lipid metabolism; fatty acid biosynthesis.</text>
</comment>
<comment type="subcellular location">
    <subcellularLocation>
        <location evidence="1">Cytoplasm</location>
    </subcellularLocation>
</comment>
<comment type="PTM">
    <text>4'-phosphopantetheine is transferred from CoA to a specific serine of apo-ACP by AcpS. This modification is essential for activity because fatty acids are bound in thioester linkage to the sulfhydryl of the prosthetic group.</text>
</comment>
<comment type="similarity">
    <text evidence="1">Belongs to the acyl carrier protein (ACP) family.</text>
</comment>
<feature type="initiator methionine" description="Removed" evidence="4">
    <location>
        <position position="1"/>
    </location>
</feature>
<feature type="chain" id="PRO_0000180176" description="Acyl carrier protein AcpP">
    <location>
        <begin position="2"/>
        <end position="78"/>
    </location>
</feature>
<feature type="domain" description="Carrier" evidence="2">
    <location>
        <begin position="2"/>
        <end position="77"/>
    </location>
</feature>
<feature type="modified residue" description="O-(pantetheine 4'-phosphoryl)serine" evidence="2 3">
    <location>
        <position position="37"/>
    </location>
</feature>